<gene>
    <name evidence="1" type="primary">psbK</name>
</gene>
<evidence type="ECO:0000255" key="1">
    <source>
        <dbReference type="HAMAP-Rule" id="MF_00441"/>
    </source>
</evidence>
<evidence type="ECO:0000305" key="2"/>
<feature type="propeptide" id="PRO_0000029461" evidence="1">
    <location>
        <begin position="1"/>
        <end position="17"/>
    </location>
</feature>
<feature type="chain" id="PRO_0000029462" description="Photosystem II reaction center protein K" evidence="1">
    <location>
        <begin position="18"/>
        <end position="54"/>
    </location>
</feature>
<feature type="transmembrane region" description="Helical" evidence="1">
    <location>
        <begin position="29"/>
        <end position="49"/>
    </location>
</feature>
<accession>Q9MS67</accession>
<keyword id="KW-0150">Chloroplast</keyword>
<keyword id="KW-0472">Membrane</keyword>
<keyword id="KW-0602">Photosynthesis</keyword>
<keyword id="KW-0604">Photosystem II</keyword>
<keyword id="KW-0934">Plastid</keyword>
<keyword id="KW-0674">Reaction center</keyword>
<keyword id="KW-0793">Thylakoid</keyword>
<keyword id="KW-0812">Transmembrane</keyword>
<keyword id="KW-1133">Transmembrane helix</keyword>
<sequence>MLLEHVTITLLNNTSFALLPEAYAPFDPLIDVLPIIPLLFLLLAFVWQASVKFR</sequence>
<dbReference type="EMBL" id="AF241280">
    <property type="protein sequence ID" value="AAF82451.1"/>
    <property type="molecule type" value="Genomic_DNA"/>
</dbReference>
<dbReference type="SMR" id="Q9MS67"/>
<dbReference type="GO" id="GO:0009535">
    <property type="term" value="C:chloroplast thylakoid membrane"/>
    <property type="evidence" value="ECO:0007669"/>
    <property type="project" value="UniProtKB-SubCell"/>
</dbReference>
<dbReference type="GO" id="GO:0009539">
    <property type="term" value="C:photosystem II reaction center"/>
    <property type="evidence" value="ECO:0007669"/>
    <property type="project" value="InterPro"/>
</dbReference>
<dbReference type="GO" id="GO:0015979">
    <property type="term" value="P:photosynthesis"/>
    <property type="evidence" value="ECO:0007669"/>
    <property type="project" value="UniProtKB-UniRule"/>
</dbReference>
<dbReference type="HAMAP" id="MF_00441">
    <property type="entry name" value="PSII_PsbK"/>
    <property type="match status" value="1"/>
</dbReference>
<dbReference type="InterPro" id="IPR003687">
    <property type="entry name" value="PSII_PsbK"/>
</dbReference>
<dbReference type="InterPro" id="IPR037270">
    <property type="entry name" value="PSII_PsbK_sf"/>
</dbReference>
<dbReference type="NCBIfam" id="NF002715">
    <property type="entry name" value="PRK02553.1"/>
    <property type="match status" value="1"/>
</dbReference>
<dbReference type="PANTHER" id="PTHR35325">
    <property type="match status" value="1"/>
</dbReference>
<dbReference type="PANTHER" id="PTHR35325:SF1">
    <property type="entry name" value="PHOTOSYSTEM II REACTION CENTER PROTEIN K"/>
    <property type="match status" value="1"/>
</dbReference>
<dbReference type="Pfam" id="PF02533">
    <property type="entry name" value="PsbK"/>
    <property type="match status" value="1"/>
</dbReference>
<dbReference type="SUPFAM" id="SSF161037">
    <property type="entry name" value="Photosystem II reaction center protein K, PsbK"/>
    <property type="match status" value="1"/>
</dbReference>
<name>PSBK_EUGMU</name>
<geneLocation type="chloroplast"/>
<proteinExistence type="inferred from homology"/>
<organism>
    <name type="scientific">Euglena mutabilis</name>
    <dbReference type="NCBI Taxonomy" id="38275"/>
    <lineage>
        <taxon>Eukaryota</taxon>
        <taxon>Discoba</taxon>
        <taxon>Euglenozoa</taxon>
        <taxon>Euglenida</taxon>
        <taxon>Spirocuta</taxon>
        <taxon>Euglenophyceae</taxon>
        <taxon>Euglenales</taxon>
        <taxon>Euglenaceae</taxon>
        <taxon>Euglena</taxon>
    </lineage>
</organism>
<protein>
    <recommendedName>
        <fullName evidence="1">Photosystem II reaction center protein K</fullName>
        <shortName evidence="1">PSII-K</shortName>
    </recommendedName>
</protein>
<reference key="1">
    <citation type="journal article" date="2001" name="Mol. Gen. Genet.">
        <title>Comparison of psbK operon organization and group III intron content in chloroplast genomes of 12 Euglenoid species.</title>
        <authorList>
            <person name="Doetsch N.A."/>
            <person name="Thompson M.D."/>
            <person name="Favreau M.R."/>
            <person name="Hallick R.B."/>
        </authorList>
    </citation>
    <scope>NUCLEOTIDE SEQUENCE [GENOMIC DNA]</scope>
</reference>
<comment type="function">
    <text evidence="1">One of the components of the core complex of photosystem II (PSII). PSII is a light-driven water:plastoquinone oxidoreductase that uses light energy to abstract electrons from H(2)O, generating O(2) and a proton gradient subsequently used for ATP formation. It consists of a core antenna complex that captures photons, and an electron transfer chain that converts photonic excitation into a charge separation.</text>
</comment>
<comment type="subunit">
    <text evidence="2">PSII is composed of 1 copy each of membrane proteins PsbA, PsbB, PsbC, PsbD, PsbE, PsbF, PsbH, PsbI, PsbJ, PsbK, PsbL, PsbM, PsbT, PsbY, PsbZ, Psb30/Ycf12, at least 3 peripheral proteins of the oxygen-evolving complex and a large number of cofactors. It forms dimeric complexes.</text>
</comment>
<comment type="subcellular location">
    <subcellularLocation>
        <location evidence="1">Plastid</location>
        <location evidence="1">Chloroplast thylakoid membrane</location>
        <topology evidence="1">Single-pass membrane protein</topology>
    </subcellularLocation>
</comment>
<comment type="similarity">
    <text evidence="1">Belongs to the PsbK family.</text>
</comment>